<organism>
    <name type="scientific">Dehalococcoides mccartyi (strain ATCC BAA-2100 / JCM 16839 / KCTC 5957 / BAV1)</name>
    <dbReference type="NCBI Taxonomy" id="216389"/>
    <lineage>
        <taxon>Bacteria</taxon>
        <taxon>Bacillati</taxon>
        <taxon>Chloroflexota</taxon>
        <taxon>Dehalococcoidia</taxon>
        <taxon>Dehalococcoidales</taxon>
        <taxon>Dehalococcoidaceae</taxon>
        <taxon>Dehalococcoides</taxon>
    </lineage>
</organism>
<keyword id="KW-0687">Ribonucleoprotein</keyword>
<keyword id="KW-0689">Ribosomal protein</keyword>
<keyword id="KW-0694">RNA-binding</keyword>
<keyword id="KW-0699">rRNA-binding</keyword>
<dbReference type="EMBL" id="CP000688">
    <property type="protein sequence ID" value="ABQ17036.1"/>
    <property type="molecule type" value="Genomic_DNA"/>
</dbReference>
<dbReference type="SMR" id="A5FRY9"/>
<dbReference type="KEGG" id="deb:DehaBAV1_0451"/>
<dbReference type="PATRIC" id="fig|216389.18.peg.494"/>
<dbReference type="HOGENOM" id="CLU_044142_4_1_0"/>
<dbReference type="GO" id="GO:0022625">
    <property type="term" value="C:cytosolic large ribosomal subunit"/>
    <property type="evidence" value="ECO:0007669"/>
    <property type="project" value="TreeGrafter"/>
</dbReference>
<dbReference type="GO" id="GO:0019843">
    <property type="term" value="F:rRNA binding"/>
    <property type="evidence" value="ECO:0007669"/>
    <property type="project" value="UniProtKB-UniRule"/>
</dbReference>
<dbReference type="GO" id="GO:0003735">
    <property type="term" value="F:structural constituent of ribosome"/>
    <property type="evidence" value="ECO:0007669"/>
    <property type="project" value="InterPro"/>
</dbReference>
<dbReference type="GO" id="GO:0006412">
    <property type="term" value="P:translation"/>
    <property type="evidence" value="ECO:0007669"/>
    <property type="project" value="UniProtKB-UniRule"/>
</dbReference>
<dbReference type="FunFam" id="2.40.30.10:FF:000004">
    <property type="entry name" value="50S ribosomal protein L3"/>
    <property type="match status" value="1"/>
</dbReference>
<dbReference type="Gene3D" id="2.40.30.10">
    <property type="entry name" value="Translation factors"/>
    <property type="match status" value="2"/>
</dbReference>
<dbReference type="HAMAP" id="MF_01325_B">
    <property type="entry name" value="Ribosomal_uL3_B"/>
    <property type="match status" value="1"/>
</dbReference>
<dbReference type="InterPro" id="IPR000597">
    <property type="entry name" value="Ribosomal_uL3"/>
</dbReference>
<dbReference type="InterPro" id="IPR019927">
    <property type="entry name" value="Ribosomal_uL3_bac/org-type"/>
</dbReference>
<dbReference type="InterPro" id="IPR019926">
    <property type="entry name" value="Ribosomal_uL3_CS"/>
</dbReference>
<dbReference type="InterPro" id="IPR009000">
    <property type="entry name" value="Transl_B-barrel_sf"/>
</dbReference>
<dbReference type="NCBIfam" id="TIGR03625">
    <property type="entry name" value="L3_bact"/>
    <property type="match status" value="1"/>
</dbReference>
<dbReference type="PANTHER" id="PTHR11229">
    <property type="entry name" value="50S RIBOSOMAL PROTEIN L3"/>
    <property type="match status" value="1"/>
</dbReference>
<dbReference type="PANTHER" id="PTHR11229:SF16">
    <property type="entry name" value="LARGE RIBOSOMAL SUBUNIT PROTEIN UL3C"/>
    <property type="match status" value="1"/>
</dbReference>
<dbReference type="Pfam" id="PF00297">
    <property type="entry name" value="Ribosomal_L3"/>
    <property type="match status" value="1"/>
</dbReference>
<dbReference type="SUPFAM" id="SSF50447">
    <property type="entry name" value="Translation proteins"/>
    <property type="match status" value="1"/>
</dbReference>
<dbReference type="PROSITE" id="PS00474">
    <property type="entry name" value="RIBOSOMAL_L3"/>
    <property type="match status" value="1"/>
</dbReference>
<accession>A5FRY9</accession>
<evidence type="ECO:0000255" key="1">
    <source>
        <dbReference type="HAMAP-Rule" id="MF_01325"/>
    </source>
</evidence>
<evidence type="ECO:0000256" key="2">
    <source>
        <dbReference type="SAM" id="MobiDB-lite"/>
    </source>
</evidence>
<evidence type="ECO:0000305" key="3"/>
<feature type="chain" id="PRO_1000086438" description="Large ribosomal subunit protein uL3">
    <location>
        <begin position="1"/>
        <end position="205"/>
    </location>
</feature>
<feature type="region of interest" description="Disordered" evidence="2">
    <location>
        <begin position="126"/>
        <end position="150"/>
    </location>
</feature>
<name>RL3_DEHMB</name>
<protein>
    <recommendedName>
        <fullName evidence="1">Large ribosomal subunit protein uL3</fullName>
    </recommendedName>
    <alternativeName>
        <fullName evidence="3">50S ribosomal protein L3</fullName>
    </alternativeName>
</protein>
<gene>
    <name evidence="1" type="primary">rplC</name>
    <name type="ordered locus">DehaBAV1_0451</name>
</gene>
<proteinExistence type="inferred from homology"/>
<reference key="1">
    <citation type="submission" date="2007-05" db="EMBL/GenBank/DDBJ databases">
        <title>Complete sequence of Dehalococcoides sp. BAV1.</title>
        <authorList>
            <consortium name="US DOE Joint Genome Institute"/>
            <person name="Copeland A."/>
            <person name="Lucas S."/>
            <person name="Lapidus A."/>
            <person name="Barry K."/>
            <person name="Detter J.C."/>
            <person name="Glavina del Rio T."/>
            <person name="Hammon N."/>
            <person name="Israni S."/>
            <person name="Pitluck S."/>
            <person name="Lowry S."/>
            <person name="Clum A."/>
            <person name="Schmutz J."/>
            <person name="Larimer F."/>
            <person name="Land M."/>
            <person name="Hauser L."/>
            <person name="Kyrpides N."/>
            <person name="Kim E."/>
            <person name="Ritalahti K.M."/>
            <person name="Loeffler F."/>
            <person name="Richardson P."/>
        </authorList>
    </citation>
    <scope>NUCLEOTIDE SEQUENCE [LARGE SCALE GENOMIC DNA]</scope>
    <source>
        <strain>ATCC BAA-2100 / JCM 16839 / KCTC 5957 / BAV1</strain>
    </source>
</reference>
<sequence length="205" mass="21838">MIQGIIGKKIGMTQIFQEDGKAQPVTLVEAGPCVVVQVKTEKQDGYEAVQLGYGKAKHITSAVKGQCRGFGEFKVLREVDVDDIAAVSVGDQITVSDFKDGEKIDASGVSRGRGFSGVVKRWHFAGGPKTHGQSDRHRAPGSIGSTTTPGRIYKGKHMAGHMGNEAVTIRNLVVLKTDAEKNLLMVKGAIPGGKNTIILIKKTGK</sequence>
<comment type="function">
    <text evidence="1">One of the primary rRNA binding proteins, it binds directly near the 3'-end of the 23S rRNA, where it nucleates assembly of the 50S subunit.</text>
</comment>
<comment type="subunit">
    <text evidence="1">Part of the 50S ribosomal subunit. Forms a cluster with proteins L14 and L19.</text>
</comment>
<comment type="similarity">
    <text evidence="1">Belongs to the universal ribosomal protein uL3 family.</text>
</comment>